<accession>A7IFE5</accession>
<gene>
    <name evidence="1" type="primary">ilvC</name>
    <name type="ordered locus">Xaut_1490</name>
</gene>
<evidence type="ECO:0000255" key="1">
    <source>
        <dbReference type="HAMAP-Rule" id="MF_00435"/>
    </source>
</evidence>
<evidence type="ECO:0000255" key="2">
    <source>
        <dbReference type="PROSITE-ProRule" id="PRU01197"/>
    </source>
</evidence>
<evidence type="ECO:0000255" key="3">
    <source>
        <dbReference type="PROSITE-ProRule" id="PRU01198"/>
    </source>
</evidence>
<dbReference type="EC" id="1.1.1.86" evidence="1"/>
<dbReference type="EMBL" id="CP000781">
    <property type="protein sequence ID" value="ABS66738.1"/>
    <property type="molecule type" value="Genomic_DNA"/>
</dbReference>
<dbReference type="SMR" id="A7IFE5"/>
<dbReference type="STRING" id="78245.Xaut_1490"/>
<dbReference type="KEGG" id="xau:Xaut_1490"/>
<dbReference type="eggNOG" id="COG0059">
    <property type="taxonomic scope" value="Bacteria"/>
</dbReference>
<dbReference type="HOGENOM" id="CLU_033821_0_1_5"/>
<dbReference type="OrthoDB" id="9804088at2"/>
<dbReference type="PhylomeDB" id="A7IFE5"/>
<dbReference type="UniPathway" id="UPA00047">
    <property type="reaction ID" value="UER00056"/>
</dbReference>
<dbReference type="UniPathway" id="UPA00049">
    <property type="reaction ID" value="UER00060"/>
</dbReference>
<dbReference type="Proteomes" id="UP000002417">
    <property type="component" value="Chromosome"/>
</dbReference>
<dbReference type="GO" id="GO:0005829">
    <property type="term" value="C:cytosol"/>
    <property type="evidence" value="ECO:0007669"/>
    <property type="project" value="TreeGrafter"/>
</dbReference>
<dbReference type="GO" id="GO:0004455">
    <property type="term" value="F:ketol-acid reductoisomerase activity"/>
    <property type="evidence" value="ECO:0007669"/>
    <property type="project" value="UniProtKB-UniRule"/>
</dbReference>
<dbReference type="GO" id="GO:0000287">
    <property type="term" value="F:magnesium ion binding"/>
    <property type="evidence" value="ECO:0007669"/>
    <property type="project" value="UniProtKB-UniRule"/>
</dbReference>
<dbReference type="GO" id="GO:0050661">
    <property type="term" value="F:NADP binding"/>
    <property type="evidence" value="ECO:0007669"/>
    <property type="project" value="InterPro"/>
</dbReference>
<dbReference type="GO" id="GO:0009097">
    <property type="term" value="P:isoleucine biosynthetic process"/>
    <property type="evidence" value="ECO:0007669"/>
    <property type="project" value="UniProtKB-UniRule"/>
</dbReference>
<dbReference type="GO" id="GO:0009099">
    <property type="term" value="P:L-valine biosynthetic process"/>
    <property type="evidence" value="ECO:0007669"/>
    <property type="project" value="UniProtKB-UniRule"/>
</dbReference>
<dbReference type="FunFam" id="3.40.50.720:FF:000023">
    <property type="entry name" value="Ketol-acid reductoisomerase (NADP(+))"/>
    <property type="match status" value="1"/>
</dbReference>
<dbReference type="Gene3D" id="6.10.240.10">
    <property type="match status" value="1"/>
</dbReference>
<dbReference type="Gene3D" id="3.40.50.720">
    <property type="entry name" value="NAD(P)-binding Rossmann-like Domain"/>
    <property type="match status" value="1"/>
</dbReference>
<dbReference type="HAMAP" id="MF_00435">
    <property type="entry name" value="IlvC"/>
    <property type="match status" value="1"/>
</dbReference>
<dbReference type="InterPro" id="IPR008927">
    <property type="entry name" value="6-PGluconate_DH-like_C_sf"/>
</dbReference>
<dbReference type="InterPro" id="IPR013023">
    <property type="entry name" value="KARI"/>
</dbReference>
<dbReference type="InterPro" id="IPR000506">
    <property type="entry name" value="KARI_C"/>
</dbReference>
<dbReference type="InterPro" id="IPR013116">
    <property type="entry name" value="KARI_N"/>
</dbReference>
<dbReference type="InterPro" id="IPR014359">
    <property type="entry name" value="KARI_prok"/>
</dbReference>
<dbReference type="InterPro" id="IPR036291">
    <property type="entry name" value="NAD(P)-bd_dom_sf"/>
</dbReference>
<dbReference type="NCBIfam" id="TIGR00465">
    <property type="entry name" value="ilvC"/>
    <property type="match status" value="1"/>
</dbReference>
<dbReference type="NCBIfam" id="NF004017">
    <property type="entry name" value="PRK05479.1"/>
    <property type="match status" value="1"/>
</dbReference>
<dbReference type="NCBIfam" id="NF009940">
    <property type="entry name" value="PRK13403.1"/>
    <property type="match status" value="1"/>
</dbReference>
<dbReference type="PANTHER" id="PTHR21371">
    <property type="entry name" value="KETOL-ACID REDUCTOISOMERASE, MITOCHONDRIAL"/>
    <property type="match status" value="1"/>
</dbReference>
<dbReference type="PANTHER" id="PTHR21371:SF1">
    <property type="entry name" value="KETOL-ACID REDUCTOISOMERASE, MITOCHONDRIAL"/>
    <property type="match status" value="1"/>
</dbReference>
<dbReference type="Pfam" id="PF01450">
    <property type="entry name" value="KARI_C"/>
    <property type="match status" value="1"/>
</dbReference>
<dbReference type="Pfam" id="PF07991">
    <property type="entry name" value="KARI_N"/>
    <property type="match status" value="1"/>
</dbReference>
<dbReference type="PIRSF" id="PIRSF000116">
    <property type="entry name" value="IlvC_gammaproteo"/>
    <property type="match status" value="1"/>
</dbReference>
<dbReference type="SUPFAM" id="SSF48179">
    <property type="entry name" value="6-phosphogluconate dehydrogenase C-terminal domain-like"/>
    <property type="match status" value="1"/>
</dbReference>
<dbReference type="SUPFAM" id="SSF51735">
    <property type="entry name" value="NAD(P)-binding Rossmann-fold domains"/>
    <property type="match status" value="1"/>
</dbReference>
<dbReference type="PROSITE" id="PS51851">
    <property type="entry name" value="KARI_C"/>
    <property type="match status" value="1"/>
</dbReference>
<dbReference type="PROSITE" id="PS51850">
    <property type="entry name" value="KARI_N"/>
    <property type="match status" value="1"/>
</dbReference>
<feature type="chain" id="PRO_1000191017" description="Ketol-acid reductoisomerase (NADP(+))">
    <location>
        <begin position="1"/>
        <end position="339"/>
    </location>
</feature>
<feature type="domain" description="KARI N-terminal Rossmann" evidence="2">
    <location>
        <begin position="1"/>
        <end position="182"/>
    </location>
</feature>
<feature type="domain" description="KARI C-terminal knotted" evidence="3">
    <location>
        <begin position="183"/>
        <end position="328"/>
    </location>
</feature>
<feature type="active site" evidence="1">
    <location>
        <position position="108"/>
    </location>
</feature>
<feature type="binding site" evidence="1">
    <location>
        <begin position="24"/>
        <end position="27"/>
    </location>
    <ligand>
        <name>NADP(+)</name>
        <dbReference type="ChEBI" id="CHEBI:58349"/>
    </ligand>
</feature>
<feature type="binding site" evidence="1">
    <location>
        <position position="48"/>
    </location>
    <ligand>
        <name>NADP(+)</name>
        <dbReference type="ChEBI" id="CHEBI:58349"/>
    </ligand>
</feature>
<feature type="binding site" evidence="1">
    <location>
        <position position="51"/>
    </location>
    <ligand>
        <name>NADP(+)</name>
        <dbReference type="ChEBI" id="CHEBI:58349"/>
    </ligand>
</feature>
<feature type="binding site" evidence="1">
    <location>
        <position position="53"/>
    </location>
    <ligand>
        <name>NADP(+)</name>
        <dbReference type="ChEBI" id="CHEBI:58349"/>
    </ligand>
</feature>
<feature type="binding site" evidence="1">
    <location>
        <begin position="83"/>
        <end position="86"/>
    </location>
    <ligand>
        <name>NADP(+)</name>
        <dbReference type="ChEBI" id="CHEBI:58349"/>
    </ligand>
</feature>
<feature type="binding site" evidence="1">
    <location>
        <position position="134"/>
    </location>
    <ligand>
        <name>NADP(+)</name>
        <dbReference type="ChEBI" id="CHEBI:58349"/>
    </ligand>
</feature>
<feature type="binding site" evidence="1">
    <location>
        <position position="191"/>
    </location>
    <ligand>
        <name>Mg(2+)</name>
        <dbReference type="ChEBI" id="CHEBI:18420"/>
        <label>1</label>
    </ligand>
</feature>
<feature type="binding site" evidence="1">
    <location>
        <position position="191"/>
    </location>
    <ligand>
        <name>Mg(2+)</name>
        <dbReference type="ChEBI" id="CHEBI:18420"/>
        <label>2</label>
    </ligand>
</feature>
<feature type="binding site" evidence="1">
    <location>
        <position position="195"/>
    </location>
    <ligand>
        <name>Mg(2+)</name>
        <dbReference type="ChEBI" id="CHEBI:18420"/>
        <label>1</label>
    </ligand>
</feature>
<feature type="binding site" evidence="1">
    <location>
        <position position="227"/>
    </location>
    <ligand>
        <name>Mg(2+)</name>
        <dbReference type="ChEBI" id="CHEBI:18420"/>
        <label>2</label>
    </ligand>
</feature>
<feature type="binding site" evidence="1">
    <location>
        <position position="231"/>
    </location>
    <ligand>
        <name>Mg(2+)</name>
        <dbReference type="ChEBI" id="CHEBI:18420"/>
        <label>2</label>
    </ligand>
</feature>
<feature type="binding site" evidence="1">
    <location>
        <position position="252"/>
    </location>
    <ligand>
        <name>substrate</name>
    </ligand>
</feature>
<sequence length="339" mass="36928">MRVYYDRDADLNLIKGKKVAVVGYGSQGHAHALNMRDSGVKEVVVALRPGSATAKKAEAEGFKVMSPADAAKWADVVMMLTPDELQGDIYRESLADNMKHGAALLFAHGLNVHFNLIEPRPDLDVLMVAPKGPGHTVRSEYQRGGGVPTLIAIAQDASGNAHDLGLSYASAIGGGRAGVIETTFKEECETDLFGEQVVLCGGLVELIRAGFETLVEAGYAPEMAYFECLHEVKLIVDLIYEGGIANMNYSISNTAEYGEYVTGPRIITPETKAEMKRVLTDIQTGKFTRDWMLENKVNQASFKATRARANAHPIEEVGEKLRAMMPWIKAKALVDKTKN</sequence>
<reference key="1">
    <citation type="submission" date="2007-07" db="EMBL/GenBank/DDBJ databases">
        <title>Complete sequence of chromosome of Xanthobacter autotrophicus Py2.</title>
        <authorList>
            <consortium name="US DOE Joint Genome Institute"/>
            <person name="Copeland A."/>
            <person name="Lucas S."/>
            <person name="Lapidus A."/>
            <person name="Barry K."/>
            <person name="Glavina del Rio T."/>
            <person name="Hammon N."/>
            <person name="Israni S."/>
            <person name="Dalin E."/>
            <person name="Tice H."/>
            <person name="Pitluck S."/>
            <person name="Sims D."/>
            <person name="Brettin T."/>
            <person name="Bruce D."/>
            <person name="Detter J.C."/>
            <person name="Han C."/>
            <person name="Tapia R."/>
            <person name="Brainard J."/>
            <person name="Schmutz J."/>
            <person name="Larimer F."/>
            <person name="Land M."/>
            <person name="Hauser L."/>
            <person name="Kyrpides N."/>
            <person name="Kim E."/>
            <person name="Ensigns S.A."/>
            <person name="Richardson P."/>
        </authorList>
    </citation>
    <scope>NUCLEOTIDE SEQUENCE [LARGE SCALE GENOMIC DNA]</scope>
    <source>
        <strain>ATCC BAA-1158 / Py2</strain>
    </source>
</reference>
<proteinExistence type="inferred from homology"/>
<keyword id="KW-0028">Amino-acid biosynthesis</keyword>
<keyword id="KW-0100">Branched-chain amino acid biosynthesis</keyword>
<keyword id="KW-0460">Magnesium</keyword>
<keyword id="KW-0479">Metal-binding</keyword>
<keyword id="KW-0521">NADP</keyword>
<keyword id="KW-0560">Oxidoreductase</keyword>
<keyword id="KW-1185">Reference proteome</keyword>
<comment type="function">
    <text evidence="1">Involved in the biosynthesis of branched-chain amino acids (BCAA). Catalyzes an alkyl-migration followed by a ketol-acid reduction of (S)-2-acetolactate (S2AL) to yield (R)-2,3-dihydroxy-isovalerate. In the isomerase reaction, S2AL is rearranged via a Mg-dependent methyl migration to produce 3-hydroxy-3-methyl-2-ketobutyrate (HMKB). In the reductase reaction, this 2-ketoacid undergoes a metal-dependent reduction by NADPH to yield (R)-2,3-dihydroxy-isovalerate.</text>
</comment>
<comment type="catalytic activity">
    <reaction evidence="1">
        <text>(2R)-2,3-dihydroxy-3-methylbutanoate + NADP(+) = (2S)-2-acetolactate + NADPH + H(+)</text>
        <dbReference type="Rhea" id="RHEA:22068"/>
        <dbReference type="ChEBI" id="CHEBI:15378"/>
        <dbReference type="ChEBI" id="CHEBI:49072"/>
        <dbReference type="ChEBI" id="CHEBI:57783"/>
        <dbReference type="ChEBI" id="CHEBI:58349"/>
        <dbReference type="ChEBI" id="CHEBI:58476"/>
        <dbReference type="EC" id="1.1.1.86"/>
    </reaction>
</comment>
<comment type="catalytic activity">
    <reaction evidence="1">
        <text>(2R,3R)-2,3-dihydroxy-3-methylpentanoate + NADP(+) = (S)-2-ethyl-2-hydroxy-3-oxobutanoate + NADPH + H(+)</text>
        <dbReference type="Rhea" id="RHEA:13493"/>
        <dbReference type="ChEBI" id="CHEBI:15378"/>
        <dbReference type="ChEBI" id="CHEBI:49256"/>
        <dbReference type="ChEBI" id="CHEBI:49258"/>
        <dbReference type="ChEBI" id="CHEBI:57783"/>
        <dbReference type="ChEBI" id="CHEBI:58349"/>
        <dbReference type="EC" id="1.1.1.86"/>
    </reaction>
</comment>
<comment type="cofactor">
    <cofactor evidence="1">
        <name>Mg(2+)</name>
        <dbReference type="ChEBI" id="CHEBI:18420"/>
    </cofactor>
    <text evidence="1">Binds 2 magnesium ions per subunit.</text>
</comment>
<comment type="pathway">
    <text evidence="1">Amino-acid biosynthesis; L-isoleucine biosynthesis; L-isoleucine from 2-oxobutanoate: step 2/4.</text>
</comment>
<comment type="pathway">
    <text evidence="1">Amino-acid biosynthesis; L-valine biosynthesis; L-valine from pyruvate: step 2/4.</text>
</comment>
<comment type="similarity">
    <text evidence="1">Belongs to the ketol-acid reductoisomerase family.</text>
</comment>
<protein>
    <recommendedName>
        <fullName evidence="1">Ketol-acid reductoisomerase (NADP(+))</fullName>
        <shortName evidence="1">KARI</shortName>
        <ecNumber evidence="1">1.1.1.86</ecNumber>
    </recommendedName>
    <alternativeName>
        <fullName evidence="1">Acetohydroxy-acid isomeroreductase</fullName>
        <shortName evidence="1">AHIR</shortName>
    </alternativeName>
    <alternativeName>
        <fullName evidence="1">Alpha-keto-beta-hydroxylacyl reductoisomerase</fullName>
    </alternativeName>
    <alternativeName>
        <fullName evidence="1">Ketol-acid reductoisomerase type 1</fullName>
    </alternativeName>
    <alternativeName>
        <fullName evidence="1">Ketol-acid reductoisomerase type I</fullName>
    </alternativeName>
</protein>
<name>ILVC_XANP2</name>
<organism>
    <name type="scientific">Xanthobacter autotrophicus (strain ATCC BAA-1158 / Py2)</name>
    <dbReference type="NCBI Taxonomy" id="78245"/>
    <lineage>
        <taxon>Bacteria</taxon>
        <taxon>Pseudomonadati</taxon>
        <taxon>Pseudomonadota</taxon>
        <taxon>Alphaproteobacteria</taxon>
        <taxon>Hyphomicrobiales</taxon>
        <taxon>Xanthobacteraceae</taxon>
        <taxon>Xanthobacter</taxon>
    </lineage>
</organism>